<organism>
    <name type="scientific">Stenotrophomonas maltophilia (strain K279a)</name>
    <dbReference type="NCBI Taxonomy" id="522373"/>
    <lineage>
        <taxon>Bacteria</taxon>
        <taxon>Pseudomonadati</taxon>
        <taxon>Pseudomonadota</taxon>
        <taxon>Gammaproteobacteria</taxon>
        <taxon>Lysobacterales</taxon>
        <taxon>Lysobacteraceae</taxon>
        <taxon>Stenotrophomonas</taxon>
        <taxon>Stenotrophomonas maltophilia group</taxon>
    </lineage>
</organism>
<dbReference type="EC" id="2.1.1.186" evidence="1"/>
<dbReference type="EMBL" id="AM743169">
    <property type="protein sequence ID" value="CAQ44404.1"/>
    <property type="molecule type" value="Genomic_DNA"/>
</dbReference>
<dbReference type="RefSeq" id="WP_012479201.1">
    <property type="nucleotide sequence ID" value="NC_010943.1"/>
</dbReference>
<dbReference type="SMR" id="B2FPH5"/>
<dbReference type="EnsemblBacteria" id="CAQ44404">
    <property type="protein sequence ID" value="CAQ44404"/>
    <property type="gene ID" value="Smlt0828"/>
</dbReference>
<dbReference type="KEGG" id="sml:Smlt0828"/>
<dbReference type="PATRIC" id="fig|522373.3.peg.797"/>
<dbReference type="eggNOG" id="COG2933">
    <property type="taxonomic scope" value="Bacteria"/>
</dbReference>
<dbReference type="HOGENOM" id="CLU_043780_0_0_6"/>
<dbReference type="Proteomes" id="UP000008840">
    <property type="component" value="Chromosome"/>
</dbReference>
<dbReference type="GO" id="GO:0005737">
    <property type="term" value="C:cytoplasm"/>
    <property type="evidence" value="ECO:0007669"/>
    <property type="project" value="UniProtKB-SubCell"/>
</dbReference>
<dbReference type="GO" id="GO:0008757">
    <property type="term" value="F:S-adenosylmethionine-dependent methyltransferase activity"/>
    <property type="evidence" value="ECO:0007669"/>
    <property type="project" value="UniProtKB-UniRule"/>
</dbReference>
<dbReference type="GO" id="GO:0032259">
    <property type="term" value="P:methylation"/>
    <property type="evidence" value="ECO:0007669"/>
    <property type="project" value="UniProtKB-KW"/>
</dbReference>
<dbReference type="GO" id="GO:0006364">
    <property type="term" value="P:rRNA processing"/>
    <property type="evidence" value="ECO:0007669"/>
    <property type="project" value="UniProtKB-UniRule"/>
</dbReference>
<dbReference type="Gene3D" id="3.30.2300.20">
    <property type="match status" value="1"/>
</dbReference>
<dbReference type="Gene3D" id="3.30.70.2810">
    <property type="match status" value="1"/>
</dbReference>
<dbReference type="Gene3D" id="3.40.50.150">
    <property type="entry name" value="Vaccinia Virus protein VP39"/>
    <property type="match status" value="1"/>
</dbReference>
<dbReference type="HAMAP" id="MF_01551">
    <property type="entry name" value="23SrRNA_methyltr_M"/>
    <property type="match status" value="1"/>
</dbReference>
<dbReference type="InterPro" id="IPR040739">
    <property type="entry name" value="RlmM_FDX"/>
</dbReference>
<dbReference type="InterPro" id="IPR048646">
    <property type="entry name" value="RlmM_THUMP-like"/>
</dbReference>
<dbReference type="InterPro" id="IPR002877">
    <property type="entry name" value="RNA_MeTrfase_FtsJ_dom"/>
</dbReference>
<dbReference type="InterPro" id="IPR011224">
    <property type="entry name" value="rRNA_MeTrfase_M"/>
</dbReference>
<dbReference type="InterPro" id="IPR029063">
    <property type="entry name" value="SAM-dependent_MTases_sf"/>
</dbReference>
<dbReference type="NCBIfam" id="NF008734">
    <property type="entry name" value="PRK11760.1"/>
    <property type="match status" value="1"/>
</dbReference>
<dbReference type="PANTHER" id="PTHR37524">
    <property type="entry name" value="RIBOSOMAL RNA LARGE SUBUNIT METHYLTRANSFERASE M"/>
    <property type="match status" value="1"/>
</dbReference>
<dbReference type="PANTHER" id="PTHR37524:SF2">
    <property type="entry name" value="RIBOSOMAL RNA METHYLTRANSFERASE FTSJ DOMAIN-CONTAINING PROTEIN"/>
    <property type="match status" value="1"/>
</dbReference>
<dbReference type="Pfam" id="PF01728">
    <property type="entry name" value="FtsJ"/>
    <property type="match status" value="1"/>
</dbReference>
<dbReference type="Pfam" id="PF18125">
    <property type="entry name" value="RlmM_FDX"/>
    <property type="match status" value="1"/>
</dbReference>
<dbReference type="Pfam" id="PF21239">
    <property type="entry name" value="RLMM_N"/>
    <property type="match status" value="1"/>
</dbReference>
<dbReference type="PIRSF" id="PIRSF028774">
    <property type="entry name" value="UCP028774"/>
    <property type="match status" value="1"/>
</dbReference>
<dbReference type="SUPFAM" id="SSF53335">
    <property type="entry name" value="S-adenosyl-L-methionine-dependent methyltransferases"/>
    <property type="match status" value="1"/>
</dbReference>
<feature type="chain" id="PRO_0000388987" description="Ribosomal RNA large subunit methyltransferase M">
    <location>
        <begin position="1"/>
        <end position="355"/>
    </location>
</feature>
<feature type="active site" description="Proton acceptor" evidence="1">
    <location>
        <position position="308"/>
    </location>
</feature>
<feature type="binding site" evidence="1">
    <location>
        <position position="191"/>
    </location>
    <ligand>
        <name>S-adenosyl-L-methionine</name>
        <dbReference type="ChEBI" id="CHEBI:59789"/>
    </ligand>
</feature>
<feature type="binding site" evidence="1">
    <location>
        <begin position="224"/>
        <end position="227"/>
    </location>
    <ligand>
        <name>S-adenosyl-L-methionine</name>
        <dbReference type="ChEBI" id="CHEBI:59789"/>
    </ligand>
</feature>
<feature type="binding site" evidence="1">
    <location>
        <position position="243"/>
    </location>
    <ligand>
        <name>S-adenosyl-L-methionine</name>
        <dbReference type="ChEBI" id="CHEBI:59789"/>
    </ligand>
</feature>
<feature type="binding site" evidence="1">
    <location>
        <position position="263"/>
    </location>
    <ligand>
        <name>S-adenosyl-L-methionine</name>
        <dbReference type="ChEBI" id="CHEBI:59789"/>
    </ligand>
</feature>
<feature type="binding site" evidence="1">
    <location>
        <position position="279"/>
    </location>
    <ligand>
        <name>S-adenosyl-L-methionine</name>
        <dbReference type="ChEBI" id="CHEBI:59789"/>
    </ligand>
</feature>
<keyword id="KW-0963">Cytoplasm</keyword>
<keyword id="KW-0489">Methyltransferase</keyword>
<keyword id="KW-1185">Reference proteome</keyword>
<keyword id="KW-0698">rRNA processing</keyword>
<keyword id="KW-0949">S-adenosyl-L-methionine</keyword>
<keyword id="KW-0808">Transferase</keyword>
<accession>B2FPH5</accession>
<name>RLMM_STRMK</name>
<sequence>MAPVTDTGIGLLCLCRQGFEPELAGELQFRAGEAGFAGYARTQRNDGYVLFMCDEAAALAPRLRWRELIFARQKLVVLAELPQLDPADRITPMLDVLADAPRFGDLWVEHPDSDAGKPLSGLARAFGNALRPALRKAGKLTDKPNNRLPRLHVVFVDGTHAFVCVADPADSAPWALGIPRLKLLPEAPSRSALKLDEALLTLLMPEEREALAKPGMRAADLGAAPGGWTWVLTRQHMHVLSIDNGPLRQHVLDTGLVEHLRADGFHWHPEQPLDWMVCDMVEQPRRVAERMATWFREGWCRHAIFNLKLPMKKRWDETRLCLDLFQDQAGKPLVVRAKQLYHDREEITVLASPLR</sequence>
<proteinExistence type="inferred from homology"/>
<gene>
    <name evidence="1" type="primary">rlmM</name>
    <name type="ordered locus">Smlt0828</name>
</gene>
<comment type="function">
    <text evidence="1">Catalyzes the 2'-O-methylation at nucleotide C2498 in 23S rRNA.</text>
</comment>
<comment type="catalytic activity">
    <reaction evidence="1">
        <text>cytidine(2498) in 23S rRNA + S-adenosyl-L-methionine = 2'-O-methylcytidine(2498) in 23S rRNA + S-adenosyl-L-homocysteine + H(+)</text>
        <dbReference type="Rhea" id="RHEA:42788"/>
        <dbReference type="Rhea" id="RHEA-COMP:10244"/>
        <dbReference type="Rhea" id="RHEA-COMP:10245"/>
        <dbReference type="ChEBI" id="CHEBI:15378"/>
        <dbReference type="ChEBI" id="CHEBI:57856"/>
        <dbReference type="ChEBI" id="CHEBI:59789"/>
        <dbReference type="ChEBI" id="CHEBI:74495"/>
        <dbReference type="ChEBI" id="CHEBI:82748"/>
        <dbReference type="EC" id="2.1.1.186"/>
    </reaction>
</comment>
<comment type="subunit">
    <text evidence="1">Monomer.</text>
</comment>
<comment type="subcellular location">
    <subcellularLocation>
        <location evidence="1">Cytoplasm</location>
    </subcellularLocation>
</comment>
<comment type="similarity">
    <text evidence="1">Belongs to the class I-like SAM-binding methyltransferase superfamily. RNA methyltransferase RlmE family. RlmM subfamily.</text>
</comment>
<protein>
    <recommendedName>
        <fullName evidence="1">Ribosomal RNA large subunit methyltransferase M</fullName>
        <ecNumber evidence="1">2.1.1.186</ecNumber>
    </recommendedName>
    <alternativeName>
        <fullName evidence="1">23S rRNA (cytidine2498-2'-O)-methyltransferase</fullName>
    </alternativeName>
    <alternativeName>
        <fullName evidence="1">23S rRNA 2'-O-ribose methyltransferase RlmM</fullName>
    </alternativeName>
</protein>
<reference key="1">
    <citation type="journal article" date="2008" name="Genome Biol.">
        <title>The complete genome, comparative and functional analysis of Stenotrophomonas maltophilia reveals an organism heavily shielded by drug resistance determinants.</title>
        <authorList>
            <person name="Crossman L.C."/>
            <person name="Gould V.C."/>
            <person name="Dow J.M."/>
            <person name="Vernikos G.S."/>
            <person name="Okazaki A."/>
            <person name="Sebaihia M."/>
            <person name="Saunders D."/>
            <person name="Arrowsmith C."/>
            <person name="Carver T."/>
            <person name="Peters N."/>
            <person name="Adlem E."/>
            <person name="Kerhornou A."/>
            <person name="Lord A."/>
            <person name="Murphy L."/>
            <person name="Seeger K."/>
            <person name="Squares R."/>
            <person name="Rutter S."/>
            <person name="Quail M.A."/>
            <person name="Rajandream M.A."/>
            <person name="Harris D."/>
            <person name="Churcher C."/>
            <person name="Bentley S.D."/>
            <person name="Parkhill J."/>
            <person name="Thomson N.R."/>
            <person name="Avison M.B."/>
        </authorList>
    </citation>
    <scope>NUCLEOTIDE SEQUENCE [LARGE SCALE GENOMIC DNA]</scope>
    <source>
        <strain>K279a</strain>
    </source>
</reference>
<evidence type="ECO:0000255" key="1">
    <source>
        <dbReference type="HAMAP-Rule" id="MF_01551"/>
    </source>
</evidence>